<reference key="1">
    <citation type="submission" date="2007-04" db="EMBL/GenBank/DDBJ databases">
        <title>Complete sequence of Pseudomonas mendocina ymp.</title>
        <authorList>
            <consortium name="US DOE Joint Genome Institute"/>
            <person name="Copeland A."/>
            <person name="Lucas S."/>
            <person name="Lapidus A."/>
            <person name="Barry K."/>
            <person name="Glavina del Rio T."/>
            <person name="Dalin E."/>
            <person name="Tice H."/>
            <person name="Pitluck S."/>
            <person name="Kiss H."/>
            <person name="Brettin T."/>
            <person name="Detter J.C."/>
            <person name="Bruce D."/>
            <person name="Han C."/>
            <person name="Schmutz J."/>
            <person name="Larimer F."/>
            <person name="Land M."/>
            <person name="Hauser L."/>
            <person name="Kyrpides N."/>
            <person name="Mikhailova N."/>
            <person name="Hersman L."/>
            <person name="Dubois J."/>
            <person name="Maurice P."/>
            <person name="Richardson P."/>
        </authorList>
    </citation>
    <scope>NUCLEOTIDE SEQUENCE [LARGE SCALE GENOMIC DNA]</scope>
    <source>
        <strain>ymp</strain>
    </source>
</reference>
<keyword id="KW-0143">Chaperone</keyword>
<dbReference type="EMBL" id="CP000680">
    <property type="protein sequence ID" value="ABP86256.1"/>
    <property type="molecule type" value="Genomic_DNA"/>
</dbReference>
<dbReference type="SMR" id="A4XY40"/>
<dbReference type="STRING" id="399739.Pmen_3508"/>
<dbReference type="KEGG" id="pmy:Pmen_3508"/>
<dbReference type="PATRIC" id="fig|399739.8.peg.3554"/>
<dbReference type="eggNOG" id="COG1076">
    <property type="taxonomic scope" value="Bacteria"/>
</dbReference>
<dbReference type="HOGENOM" id="CLU_068529_2_0_6"/>
<dbReference type="OrthoDB" id="287587at2"/>
<dbReference type="GO" id="GO:1990230">
    <property type="term" value="C:iron-sulfur cluster transfer complex"/>
    <property type="evidence" value="ECO:0007669"/>
    <property type="project" value="TreeGrafter"/>
</dbReference>
<dbReference type="GO" id="GO:0001671">
    <property type="term" value="F:ATPase activator activity"/>
    <property type="evidence" value="ECO:0007669"/>
    <property type="project" value="InterPro"/>
</dbReference>
<dbReference type="GO" id="GO:0051087">
    <property type="term" value="F:protein-folding chaperone binding"/>
    <property type="evidence" value="ECO:0007669"/>
    <property type="project" value="InterPro"/>
</dbReference>
<dbReference type="GO" id="GO:0044571">
    <property type="term" value="P:[2Fe-2S] cluster assembly"/>
    <property type="evidence" value="ECO:0007669"/>
    <property type="project" value="InterPro"/>
</dbReference>
<dbReference type="GO" id="GO:0051259">
    <property type="term" value="P:protein complex oligomerization"/>
    <property type="evidence" value="ECO:0007669"/>
    <property type="project" value="InterPro"/>
</dbReference>
<dbReference type="GO" id="GO:0006457">
    <property type="term" value="P:protein folding"/>
    <property type="evidence" value="ECO:0007669"/>
    <property type="project" value="UniProtKB-UniRule"/>
</dbReference>
<dbReference type="CDD" id="cd06257">
    <property type="entry name" value="DnaJ"/>
    <property type="match status" value="1"/>
</dbReference>
<dbReference type="Gene3D" id="1.10.287.110">
    <property type="entry name" value="DnaJ domain"/>
    <property type="match status" value="1"/>
</dbReference>
<dbReference type="Gene3D" id="1.20.1280.20">
    <property type="entry name" value="HscB, C-terminal domain"/>
    <property type="match status" value="1"/>
</dbReference>
<dbReference type="HAMAP" id="MF_00682">
    <property type="entry name" value="HscB"/>
    <property type="match status" value="1"/>
</dbReference>
<dbReference type="InterPro" id="IPR001623">
    <property type="entry name" value="DnaJ_domain"/>
</dbReference>
<dbReference type="InterPro" id="IPR004640">
    <property type="entry name" value="HscB"/>
</dbReference>
<dbReference type="InterPro" id="IPR036386">
    <property type="entry name" value="HscB_C_sf"/>
</dbReference>
<dbReference type="InterPro" id="IPR009073">
    <property type="entry name" value="HscB_oligo_C"/>
</dbReference>
<dbReference type="InterPro" id="IPR036869">
    <property type="entry name" value="J_dom_sf"/>
</dbReference>
<dbReference type="NCBIfam" id="TIGR00714">
    <property type="entry name" value="hscB"/>
    <property type="match status" value="1"/>
</dbReference>
<dbReference type="NCBIfam" id="NF001420">
    <property type="entry name" value="PRK00294.1"/>
    <property type="match status" value="1"/>
</dbReference>
<dbReference type="PANTHER" id="PTHR14021">
    <property type="entry name" value="IRON-SULFUR CLUSTER CO-CHAPERONE PROTEIN HSCB"/>
    <property type="match status" value="1"/>
</dbReference>
<dbReference type="PANTHER" id="PTHR14021:SF15">
    <property type="entry name" value="IRON-SULFUR CLUSTER CO-CHAPERONE PROTEIN HSCB"/>
    <property type="match status" value="1"/>
</dbReference>
<dbReference type="Pfam" id="PF00226">
    <property type="entry name" value="DnaJ"/>
    <property type="match status" value="1"/>
</dbReference>
<dbReference type="Pfam" id="PF07743">
    <property type="entry name" value="HSCB_C"/>
    <property type="match status" value="1"/>
</dbReference>
<dbReference type="SMART" id="SM00271">
    <property type="entry name" value="DnaJ"/>
    <property type="match status" value="1"/>
</dbReference>
<dbReference type="SUPFAM" id="SSF46565">
    <property type="entry name" value="Chaperone J-domain"/>
    <property type="match status" value="1"/>
</dbReference>
<dbReference type="SUPFAM" id="SSF47144">
    <property type="entry name" value="HSC20 (HSCB), C-terminal oligomerisation domain"/>
    <property type="match status" value="1"/>
</dbReference>
<dbReference type="PROSITE" id="PS50076">
    <property type="entry name" value="DNAJ_2"/>
    <property type="match status" value="1"/>
</dbReference>
<evidence type="ECO:0000255" key="1">
    <source>
        <dbReference type="HAMAP-Rule" id="MF_00682"/>
    </source>
</evidence>
<comment type="function">
    <text evidence="1">Co-chaperone involved in the maturation of iron-sulfur cluster-containing proteins. Seems to help targeting proteins to be folded toward HscA.</text>
</comment>
<comment type="subunit">
    <text evidence="1">Interacts with HscA and stimulates its ATPase activity.</text>
</comment>
<comment type="similarity">
    <text evidence="1">Belongs to the HscB family.</text>
</comment>
<proteinExistence type="inferred from homology"/>
<accession>A4XY40</accession>
<name>HSCB_ECTM1</name>
<gene>
    <name evidence="1" type="primary">hscB</name>
    <name type="ordered locus">Pmen_3508</name>
</gene>
<feature type="chain" id="PRO_1000083020" description="Co-chaperone protein HscB homolog">
    <location>
        <begin position="1"/>
        <end position="173"/>
    </location>
</feature>
<feature type="domain" description="J" evidence="1">
    <location>
        <begin position="5"/>
        <end position="77"/>
    </location>
</feature>
<organism>
    <name type="scientific">Ectopseudomonas mendocina (strain ymp)</name>
    <name type="common">Pseudomonas mendocina</name>
    <dbReference type="NCBI Taxonomy" id="399739"/>
    <lineage>
        <taxon>Bacteria</taxon>
        <taxon>Pseudomonadati</taxon>
        <taxon>Pseudomonadota</taxon>
        <taxon>Gammaproteobacteria</taxon>
        <taxon>Pseudomonadales</taxon>
        <taxon>Pseudomonadaceae</taxon>
        <taxon>Ectopseudomonas</taxon>
    </lineage>
</organism>
<sequence length="173" mass="20330">MGNPCHFALFDLQPSFRLDLEQLAARYRELARQVHPDRFADAGEREQRLALERSACLNEAYQVLKTPSQRARYLLALRGPELPLEVTVQDPDFLLQQMQLREELEELQDDADLAGVAAFKRRLKTAQEQLNDSFAACWDDDTRREEAERLMRRMQFLDKLSHEVRQLEERLDD</sequence>
<protein>
    <recommendedName>
        <fullName evidence="1">Co-chaperone protein HscB homolog</fullName>
    </recommendedName>
</protein>